<keyword id="KW-0150">Chloroplast</keyword>
<keyword id="KW-0249">Electron transport</keyword>
<keyword id="KW-0349">Heme</keyword>
<keyword id="KW-0408">Iron</keyword>
<keyword id="KW-0472">Membrane</keyword>
<keyword id="KW-0479">Metal-binding</keyword>
<keyword id="KW-0602">Photosynthesis</keyword>
<keyword id="KW-0604">Photosystem II</keyword>
<keyword id="KW-0934">Plastid</keyword>
<keyword id="KW-0793">Thylakoid</keyword>
<keyword id="KW-0812">Transmembrane</keyword>
<keyword id="KW-1133">Transmembrane helix</keyword>
<keyword id="KW-0813">Transport</keyword>
<protein>
    <recommendedName>
        <fullName evidence="1">Cytochrome b559 subunit beta</fullName>
    </recommendedName>
    <alternativeName>
        <fullName evidence="1">PSII reaction center subunit VI</fullName>
    </alternativeName>
</protein>
<accession>Q71L52</accession>
<geneLocation type="chloroplast"/>
<dbReference type="EMBL" id="AF469721">
    <property type="protein sequence ID" value="AAQ05252.1"/>
    <property type="molecule type" value="Genomic_DNA"/>
</dbReference>
<dbReference type="RefSeq" id="YP_009113836.1">
    <property type="nucleotide sequence ID" value="NC_026041.1"/>
</dbReference>
<dbReference type="SMR" id="Q71L52"/>
<dbReference type="GeneID" id="23525952"/>
<dbReference type="GO" id="GO:0009535">
    <property type="term" value="C:chloroplast thylakoid membrane"/>
    <property type="evidence" value="ECO:0007669"/>
    <property type="project" value="UniProtKB-SubCell"/>
</dbReference>
<dbReference type="GO" id="GO:0009539">
    <property type="term" value="C:photosystem II reaction center"/>
    <property type="evidence" value="ECO:0007669"/>
    <property type="project" value="InterPro"/>
</dbReference>
<dbReference type="GO" id="GO:0009055">
    <property type="term" value="F:electron transfer activity"/>
    <property type="evidence" value="ECO:0007669"/>
    <property type="project" value="UniProtKB-UniRule"/>
</dbReference>
<dbReference type="GO" id="GO:0020037">
    <property type="term" value="F:heme binding"/>
    <property type="evidence" value="ECO:0007669"/>
    <property type="project" value="InterPro"/>
</dbReference>
<dbReference type="GO" id="GO:0005506">
    <property type="term" value="F:iron ion binding"/>
    <property type="evidence" value="ECO:0007669"/>
    <property type="project" value="UniProtKB-UniRule"/>
</dbReference>
<dbReference type="GO" id="GO:0009767">
    <property type="term" value="P:photosynthetic electron transport chain"/>
    <property type="evidence" value="ECO:0007669"/>
    <property type="project" value="InterPro"/>
</dbReference>
<dbReference type="HAMAP" id="MF_00643">
    <property type="entry name" value="PSII_PsbF"/>
    <property type="match status" value="1"/>
</dbReference>
<dbReference type="InterPro" id="IPR006241">
    <property type="entry name" value="PSII_cyt_b559_bsu"/>
</dbReference>
<dbReference type="InterPro" id="IPR006216">
    <property type="entry name" value="PSII_cyt_b559_CS"/>
</dbReference>
<dbReference type="InterPro" id="IPR013081">
    <property type="entry name" value="PSII_cyt_b559_N"/>
</dbReference>
<dbReference type="NCBIfam" id="TIGR01333">
    <property type="entry name" value="cyt_b559_beta"/>
    <property type="match status" value="1"/>
</dbReference>
<dbReference type="Pfam" id="PF00283">
    <property type="entry name" value="Cytochrom_B559"/>
    <property type="match status" value="1"/>
</dbReference>
<dbReference type="PIRSF" id="PIRSF000037">
    <property type="entry name" value="PsbF"/>
    <property type="match status" value="1"/>
</dbReference>
<dbReference type="SUPFAM" id="SSF161045">
    <property type="entry name" value="Cytochrome b559 subunits"/>
    <property type="match status" value="1"/>
</dbReference>
<dbReference type="PROSITE" id="PS00537">
    <property type="entry name" value="CYTOCHROME_B559"/>
    <property type="match status" value="1"/>
</dbReference>
<reference key="1">
    <citation type="journal article" date="2003" name="Mol. Phylogenet. Evol.">
        <title>Inference of higher-order relationships in the cycads from a large chloroplast data set.</title>
        <authorList>
            <person name="Rai H.S."/>
            <person name="O'Brien H.E."/>
            <person name="Reeves P.A."/>
            <person name="Olmstead R.G."/>
            <person name="Graham S.W."/>
        </authorList>
    </citation>
    <scope>NUCLEOTIDE SEQUENCE [GENOMIC DNA]</scope>
</reference>
<name>PSBF_STAER</name>
<gene>
    <name evidence="1" type="primary">psbF</name>
</gene>
<comment type="function">
    <text evidence="1">This b-type cytochrome is tightly associated with the reaction center of photosystem II (PSII). PSII is a light-driven water:plastoquinone oxidoreductase that uses light energy to abstract electrons from H(2)O, generating O(2) and a proton gradient subsequently used for ATP formation. It consists of a core antenna complex that captures photons, and an electron transfer chain that converts photonic excitation into a charge separation.</text>
</comment>
<comment type="cofactor">
    <cofactor evidence="1">
        <name>heme b</name>
        <dbReference type="ChEBI" id="CHEBI:60344"/>
    </cofactor>
    <text evidence="1">With its partner (PsbE) binds heme. PSII binds additional chlorophylls, carotenoids and specific lipids.</text>
</comment>
<comment type="subunit">
    <text evidence="1">Heterodimer of an alpha subunit and a beta subunit. PSII is composed of 1 copy each of membrane proteins PsbA, PsbB, PsbC, PsbD, PsbE, PsbF, PsbH, PsbI, PsbJ, PsbK, PsbL, PsbM, PsbT, PsbX, PsbY, PsbZ, Psb30/Ycf12, at least 3 peripheral proteins of the oxygen-evolving complex and a large number of cofactors. It forms dimeric complexes.</text>
</comment>
<comment type="subcellular location">
    <subcellularLocation>
        <location evidence="1">Plastid</location>
        <location evidence="1">Chloroplast thylakoid membrane</location>
        <topology evidence="1">Single-pass membrane protein</topology>
    </subcellularLocation>
</comment>
<comment type="similarity">
    <text evidence="1">Belongs to the PsbE/PsbF family.</text>
</comment>
<proteinExistence type="inferred from homology"/>
<organism>
    <name type="scientific">Stangeria eriopus</name>
    <name type="common">Natal grass cycad</name>
    <name type="synonym">Lomaria eriopus</name>
    <dbReference type="NCBI Taxonomy" id="34343"/>
    <lineage>
        <taxon>Eukaryota</taxon>
        <taxon>Viridiplantae</taxon>
        <taxon>Streptophyta</taxon>
        <taxon>Embryophyta</taxon>
        <taxon>Tracheophyta</taxon>
        <taxon>Spermatophyta</taxon>
        <taxon>Cycadidae</taxon>
        <taxon>Cycadales</taxon>
        <taxon>Zamiaceae</taxon>
        <taxon>Stangeria</taxon>
    </lineage>
</organism>
<feature type="chain" id="PRO_0000200456" description="Cytochrome b559 subunit beta">
    <location>
        <begin position="1"/>
        <end position="39"/>
    </location>
</feature>
<feature type="transmembrane region" description="Helical" evidence="1">
    <location>
        <begin position="14"/>
        <end position="30"/>
    </location>
</feature>
<feature type="binding site" description="axial binding residue" evidence="1">
    <location>
        <position position="18"/>
    </location>
    <ligand>
        <name>heme</name>
        <dbReference type="ChEBI" id="CHEBI:30413"/>
        <note>ligand shared with alpha subunit</note>
    </ligand>
    <ligandPart>
        <name>Fe</name>
        <dbReference type="ChEBI" id="CHEBI:18248"/>
    </ligandPart>
</feature>
<sequence>MTIDRTYPIFTVRWLAVHGLAVPTVFFLGSISAMQFIQR</sequence>
<evidence type="ECO:0000255" key="1">
    <source>
        <dbReference type="HAMAP-Rule" id="MF_00643"/>
    </source>
</evidence>